<reference key="1">
    <citation type="journal article" date="2009" name="PLoS Genet.">
        <title>Organised genome dynamics in the Escherichia coli species results in highly diverse adaptive paths.</title>
        <authorList>
            <person name="Touchon M."/>
            <person name="Hoede C."/>
            <person name="Tenaillon O."/>
            <person name="Barbe V."/>
            <person name="Baeriswyl S."/>
            <person name="Bidet P."/>
            <person name="Bingen E."/>
            <person name="Bonacorsi S."/>
            <person name="Bouchier C."/>
            <person name="Bouvet O."/>
            <person name="Calteau A."/>
            <person name="Chiapello H."/>
            <person name="Clermont O."/>
            <person name="Cruveiller S."/>
            <person name="Danchin A."/>
            <person name="Diard M."/>
            <person name="Dossat C."/>
            <person name="Karoui M.E."/>
            <person name="Frapy E."/>
            <person name="Garry L."/>
            <person name="Ghigo J.M."/>
            <person name="Gilles A.M."/>
            <person name="Johnson J."/>
            <person name="Le Bouguenec C."/>
            <person name="Lescat M."/>
            <person name="Mangenot S."/>
            <person name="Martinez-Jehanne V."/>
            <person name="Matic I."/>
            <person name="Nassif X."/>
            <person name="Oztas S."/>
            <person name="Petit M.A."/>
            <person name="Pichon C."/>
            <person name="Rouy Z."/>
            <person name="Ruf C.S."/>
            <person name="Schneider D."/>
            <person name="Tourret J."/>
            <person name="Vacherie B."/>
            <person name="Vallenet D."/>
            <person name="Medigue C."/>
            <person name="Rocha E.P.C."/>
            <person name="Denamur E."/>
        </authorList>
    </citation>
    <scope>NUCLEOTIDE SEQUENCE [LARGE SCALE GENOMIC DNA]</scope>
    <source>
        <strain>UMN026 / ExPEC</strain>
    </source>
</reference>
<sequence length="130" mass="14127">MSMQDPIADMLTRIRNGQAANKAAVTMPSSKLKVAIANVLKEEGFIEDFKVEGDTKPELELTLKYFQGKAVVESIQRVSRPGLRIYKRKDELPKVMAGLGIAVVSTSKGVMTDRAARQAGLGGEIICYVA</sequence>
<protein>
    <recommendedName>
        <fullName evidence="1">Small ribosomal subunit protein uS8</fullName>
    </recommendedName>
    <alternativeName>
        <fullName evidence="2">30S ribosomal protein S8</fullName>
    </alternativeName>
</protein>
<comment type="function">
    <text evidence="1">One of the primary rRNA binding proteins, it binds directly to 16S rRNA central domain where it helps coordinate assembly of the platform of the 30S subunit.</text>
</comment>
<comment type="subunit">
    <text evidence="1">Part of the 30S ribosomal subunit. Contacts proteins S5 and S12.</text>
</comment>
<comment type="similarity">
    <text evidence="1">Belongs to the universal ribosomal protein uS8 family.</text>
</comment>
<feature type="chain" id="PRO_1000140552" description="Small ribosomal subunit protein uS8">
    <location>
        <begin position="1"/>
        <end position="130"/>
    </location>
</feature>
<proteinExistence type="inferred from homology"/>
<keyword id="KW-0687">Ribonucleoprotein</keyword>
<keyword id="KW-0689">Ribosomal protein</keyword>
<keyword id="KW-0694">RNA-binding</keyword>
<keyword id="KW-0699">rRNA-binding</keyword>
<accession>B7NDS7</accession>
<evidence type="ECO:0000255" key="1">
    <source>
        <dbReference type="HAMAP-Rule" id="MF_01302"/>
    </source>
</evidence>
<evidence type="ECO:0000305" key="2"/>
<dbReference type="EMBL" id="CU928163">
    <property type="protein sequence ID" value="CAR14927.1"/>
    <property type="molecule type" value="Genomic_DNA"/>
</dbReference>
<dbReference type="RefSeq" id="WP_000062611.1">
    <property type="nucleotide sequence ID" value="NC_011751.1"/>
</dbReference>
<dbReference type="RefSeq" id="YP_002414432.1">
    <property type="nucleotide sequence ID" value="NC_011751.1"/>
</dbReference>
<dbReference type="SMR" id="B7NDS7"/>
<dbReference type="STRING" id="585056.ECUMN_3779"/>
<dbReference type="GeneID" id="93778681"/>
<dbReference type="KEGG" id="eum:ECUMN_3779"/>
<dbReference type="PATRIC" id="fig|585056.7.peg.3954"/>
<dbReference type="HOGENOM" id="CLU_098428_0_0_6"/>
<dbReference type="Proteomes" id="UP000007097">
    <property type="component" value="Chromosome"/>
</dbReference>
<dbReference type="GO" id="GO:1990904">
    <property type="term" value="C:ribonucleoprotein complex"/>
    <property type="evidence" value="ECO:0007669"/>
    <property type="project" value="UniProtKB-KW"/>
</dbReference>
<dbReference type="GO" id="GO:0005840">
    <property type="term" value="C:ribosome"/>
    <property type="evidence" value="ECO:0007669"/>
    <property type="project" value="UniProtKB-KW"/>
</dbReference>
<dbReference type="GO" id="GO:0019843">
    <property type="term" value="F:rRNA binding"/>
    <property type="evidence" value="ECO:0007669"/>
    <property type="project" value="UniProtKB-UniRule"/>
</dbReference>
<dbReference type="GO" id="GO:0003735">
    <property type="term" value="F:structural constituent of ribosome"/>
    <property type="evidence" value="ECO:0007669"/>
    <property type="project" value="InterPro"/>
</dbReference>
<dbReference type="GO" id="GO:0006412">
    <property type="term" value="P:translation"/>
    <property type="evidence" value="ECO:0007669"/>
    <property type="project" value="UniProtKB-UniRule"/>
</dbReference>
<dbReference type="FunFam" id="3.30.1370.30:FF:000003">
    <property type="entry name" value="30S ribosomal protein S8"/>
    <property type="match status" value="1"/>
</dbReference>
<dbReference type="FunFam" id="3.30.1490.10:FF:000001">
    <property type="entry name" value="30S ribosomal protein S8"/>
    <property type="match status" value="1"/>
</dbReference>
<dbReference type="Gene3D" id="3.30.1370.30">
    <property type="match status" value="1"/>
</dbReference>
<dbReference type="Gene3D" id="3.30.1490.10">
    <property type="match status" value="1"/>
</dbReference>
<dbReference type="HAMAP" id="MF_01302_B">
    <property type="entry name" value="Ribosomal_uS8_B"/>
    <property type="match status" value="1"/>
</dbReference>
<dbReference type="InterPro" id="IPR000630">
    <property type="entry name" value="Ribosomal_uS8"/>
</dbReference>
<dbReference type="InterPro" id="IPR047863">
    <property type="entry name" value="Ribosomal_uS8_CS"/>
</dbReference>
<dbReference type="InterPro" id="IPR035987">
    <property type="entry name" value="Ribosomal_uS8_sf"/>
</dbReference>
<dbReference type="NCBIfam" id="NF001109">
    <property type="entry name" value="PRK00136.1"/>
    <property type="match status" value="1"/>
</dbReference>
<dbReference type="PANTHER" id="PTHR11758">
    <property type="entry name" value="40S RIBOSOMAL PROTEIN S15A"/>
    <property type="match status" value="1"/>
</dbReference>
<dbReference type="Pfam" id="PF00410">
    <property type="entry name" value="Ribosomal_S8"/>
    <property type="match status" value="1"/>
</dbReference>
<dbReference type="SUPFAM" id="SSF56047">
    <property type="entry name" value="Ribosomal protein S8"/>
    <property type="match status" value="1"/>
</dbReference>
<dbReference type="PROSITE" id="PS00053">
    <property type="entry name" value="RIBOSOMAL_S8"/>
    <property type="match status" value="1"/>
</dbReference>
<organism>
    <name type="scientific">Escherichia coli O17:K52:H18 (strain UMN026 / ExPEC)</name>
    <dbReference type="NCBI Taxonomy" id="585056"/>
    <lineage>
        <taxon>Bacteria</taxon>
        <taxon>Pseudomonadati</taxon>
        <taxon>Pseudomonadota</taxon>
        <taxon>Gammaproteobacteria</taxon>
        <taxon>Enterobacterales</taxon>
        <taxon>Enterobacteriaceae</taxon>
        <taxon>Escherichia</taxon>
    </lineage>
</organism>
<name>RS8_ECOLU</name>
<gene>
    <name evidence="1" type="primary">rpsH</name>
    <name type="ordered locus">ECUMN_3779</name>
</gene>